<sequence>MLRVNSKSSIKTFVRHLSHKELKFGVEGRAALLKGVNTLADAVSVTLGPKGRNVLIEQQFGAPKITKDGVTVAKAITLEDKFEDLGAKLLQEVASKTNESAGDGTTSATVLGRSIFTESVKNVAAGCNPMDLRRGSQAAVEAVIEFLQKNKKEITTSEEIAQVATISANGDKHIGDLLANAMEKVGKEGVITVKEGKTLEDELEVTEGMKFDRGFISPYFITNTKTGKVEFENPLILLSEKKISSIQDILPSLELSNQTRRPLLIIAEDVDGEALAACILNKLRGQVQVCAVKAPGFGDNRKNTLGDIAILSGGTVFTEELDIKPENATIEQLGSAGAVTITKEDTVLLNGEGSKDNLEARCEQIRSVIADVHTTEYEKEKLQERLAKLSGGVAVIKVGGASEVEVGEKKDRYEDALNATRAAVEEGILPGGGTALIKATKILDEVKEKAVNFDQKLGVDTIRAAITKPAKRIIENAGEEGAVIVGKIYDEPEFNKGYDSQKGEFTDMIAAGIIDPFKVVKNGLVDASGVASLLATTECAIVDAPQPKGSPAAPPAPGMGGMPGMF</sequence>
<evidence type="ECO:0000250" key="1"/>
<evidence type="ECO:0000255" key="2"/>
<evidence type="ECO:0000256" key="3">
    <source>
        <dbReference type="SAM" id="MobiDB-lite"/>
    </source>
</evidence>
<evidence type="ECO:0000305" key="4"/>
<protein>
    <recommendedName>
        <fullName>Heat shock protein 60, mitochondrial</fullName>
    </recommendedName>
    <alternativeName>
        <fullName>60 kDa chaperonin</fullName>
    </alternativeName>
    <alternativeName>
        <fullName>Protein Cpn60</fullName>
    </alternativeName>
</protein>
<keyword id="KW-0067">ATP-binding</keyword>
<keyword id="KW-0143">Chaperone</keyword>
<keyword id="KW-0496">Mitochondrion</keyword>
<keyword id="KW-0547">Nucleotide-binding</keyword>
<keyword id="KW-1185">Reference proteome</keyword>
<keyword id="KW-0346">Stress response</keyword>
<keyword id="KW-0809">Transit peptide</keyword>
<reference key="1">
    <citation type="submission" date="1998-08" db="EMBL/GenBank/DDBJ databases">
        <title>Isolation and characterization of the HSP60 gene from the pathogenic fungus Candida albicans.</title>
        <authorList>
            <person name="Swoboda R.K."/>
            <person name="Gow N.A.R."/>
            <person name="Fidel P.L. Jr."/>
            <person name="Brown A.J.P."/>
        </authorList>
    </citation>
    <scope>NUCLEOTIDE SEQUENCE [GENOMIC DNA]</scope>
    <source>
        <strain>ATCC 10261 / CBS 2718 / NBRC 1061</strain>
    </source>
</reference>
<reference key="2">
    <citation type="journal article" date="2004" name="Proc. Natl. Acad. Sci. U.S.A.">
        <title>The diploid genome sequence of Candida albicans.</title>
        <authorList>
            <person name="Jones T."/>
            <person name="Federspiel N.A."/>
            <person name="Chibana H."/>
            <person name="Dungan J."/>
            <person name="Kalman S."/>
            <person name="Magee B.B."/>
            <person name="Newport G."/>
            <person name="Thorstenson Y.R."/>
            <person name="Agabian N."/>
            <person name="Magee P.T."/>
            <person name="Davis R.W."/>
            <person name="Scherer S."/>
        </authorList>
    </citation>
    <scope>NUCLEOTIDE SEQUENCE [LARGE SCALE GENOMIC DNA]</scope>
    <source>
        <strain>SC5314 / ATCC MYA-2876</strain>
    </source>
</reference>
<reference key="3">
    <citation type="journal article" date="2007" name="Genome Biol.">
        <title>Assembly of the Candida albicans genome into sixteen supercontigs aligned on the eight chromosomes.</title>
        <authorList>
            <person name="van het Hoog M."/>
            <person name="Rast T.J."/>
            <person name="Martchenko M."/>
            <person name="Grindle S."/>
            <person name="Dignard D."/>
            <person name="Hogues H."/>
            <person name="Cuomo C."/>
            <person name="Berriman M."/>
            <person name="Scherer S."/>
            <person name="Magee B.B."/>
            <person name="Whiteway M."/>
            <person name="Chibana H."/>
            <person name="Nantel A."/>
            <person name="Magee P.T."/>
        </authorList>
    </citation>
    <scope>GENOME REANNOTATION</scope>
    <source>
        <strain>SC5314 / ATCC MYA-2876</strain>
    </source>
</reference>
<reference key="4">
    <citation type="journal article" date="2013" name="Genome Biol.">
        <title>Assembly of a phased diploid Candida albicans genome facilitates allele-specific measurements and provides a simple model for repeat and indel structure.</title>
        <authorList>
            <person name="Muzzey D."/>
            <person name="Schwartz K."/>
            <person name="Weissman J.S."/>
            <person name="Sherlock G."/>
        </authorList>
    </citation>
    <scope>NUCLEOTIDE SEQUENCE [LARGE SCALE GENOMIC DNA]</scope>
    <scope>GENOME REANNOTATION</scope>
    <source>
        <strain>SC5314 / ATCC MYA-2876</strain>
    </source>
</reference>
<name>HSP60_CANAL</name>
<gene>
    <name type="primary">HSP60</name>
    <name type="ordered locus">CAALFM_CR06490CA</name>
    <name type="ORF">CaO19.717</name>
    <name type="ORF">CaO19.8336</name>
</gene>
<dbReference type="EMBL" id="AF085694">
    <property type="protein sequence ID" value="AAC34885.1"/>
    <property type="molecule type" value="Genomic_DNA"/>
</dbReference>
<dbReference type="EMBL" id="CP017630">
    <property type="protein sequence ID" value="AOW31348.1"/>
    <property type="molecule type" value="Genomic_DNA"/>
</dbReference>
<dbReference type="RefSeq" id="XP_713077.1">
    <property type="nucleotide sequence ID" value="XM_707984.2"/>
</dbReference>
<dbReference type="SMR" id="O74261"/>
<dbReference type="BioGRID" id="1228332">
    <property type="interactions" value="2"/>
</dbReference>
<dbReference type="FunCoup" id="O74261">
    <property type="interactions" value="1602"/>
</dbReference>
<dbReference type="STRING" id="237561.O74261"/>
<dbReference type="EnsemblFungi" id="CR_06490C_A-T">
    <property type="protein sequence ID" value="CR_06490C_A-T-p1"/>
    <property type="gene ID" value="CR_06490C_A"/>
</dbReference>
<dbReference type="GeneID" id="3645275"/>
<dbReference type="KEGG" id="cal:CAALFM_CR06490CA"/>
<dbReference type="CGD" id="CAL0000174464">
    <property type="gene designation" value="HSP60"/>
</dbReference>
<dbReference type="VEuPathDB" id="FungiDB:CR_06490C_A"/>
<dbReference type="eggNOG" id="KOG0356">
    <property type="taxonomic scope" value="Eukaryota"/>
</dbReference>
<dbReference type="HOGENOM" id="CLU_016503_3_0_1"/>
<dbReference type="InParanoid" id="O74261"/>
<dbReference type="OMA" id="TDTDKME"/>
<dbReference type="OrthoDB" id="1733909at2759"/>
<dbReference type="PRO" id="PR:O74261"/>
<dbReference type="Proteomes" id="UP000000559">
    <property type="component" value="Chromosome R"/>
</dbReference>
<dbReference type="GO" id="GO:0005743">
    <property type="term" value="C:mitochondrial inner membrane"/>
    <property type="evidence" value="ECO:0000318"/>
    <property type="project" value="GO_Central"/>
</dbReference>
<dbReference type="GO" id="GO:0005758">
    <property type="term" value="C:mitochondrial intermembrane space"/>
    <property type="evidence" value="ECO:0007669"/>
    <property type="project" value="EnsemblFungi"/>
</dbReference>
<dbReference type="GO" id="GO:0005759">
    <property type="term" value="C:mitochondrial matrix"/>
    <property type="evidence" value="ECO:0000318"/>
    <property type="project" value="GO_Central"/>
</dbReference>
<dbReference type="GO" id="GO:0071014">
    <property type="term" value="C:post-mRNA release spliceosomal complex"/>
    <property type="evidence" value="ECO:0007669"/>
    <property type="project" value="EnsemblFungi"/>
</dbReference>
<dbReference type="GO" id="GO:0005524">
    <property type="term" value="F:ATP binding"/>
    <property type="evidence" value="ECO:0007669"/>
    <property type="project" value="UniProtKB-KW"/>
</dbReference>
<dbReference type="GO" id="GO:0140662">
    <property type="term" value="F:ATP-dependent protein folding chaperone"/>
    <property type="evidence" value="ECO:0007669"/>
    <property type="project" value="InterPro"/>
</dbReference>
<dbReference type="GO" id="GO:0051087">
    <property type="term" value="F:protein-folding chaperone binding"/>
    <property type="evidence" value="ECO:0000318"/>
    <property type="project" value="GO_Central"/>
</dbReference>
<dbReference type="GO" id="GO:0034605">
    <property type="term" value="P:cellular response to heat"/>
    <property type="evidence" value="ECO:0000315"/>
    <property type="project" value="CGD"/>
</dbReference>
<dbReference type="GO" id="GO:0034514">
    <property type="term" value="P:mitochondrial unfolded protein response"/>
    <property type="evidence" value="ECO:0000318"/>
    <property type="project" value="GO_Central"/>
</dbReference>
<dbReference type="GO" id="GO:0007005">
    <property type="term" value="P:mitochondrion organization"/>
    <property type="evidence" value="ECO:0000318"/>
    <property type="project" value="GO_Central"/>
</dbReference>
<dbReference type="GO" id="GO:0006457">
    <property type="term" value="P:protein folding"/>
    <property type="evidence" value="ECO:0000318"/>
    <property type="project" value="GO_Central"/>
</dbReference>
<dbReference type="GO" id="GO:0045041">
    <property type="term" value="P:protein import into mitochondrial intermembrane space"/>
    <property type="evidence" value="ECO:0000318"/>
    <property type="project" value="GO_Central"/>
</dbReference>
<dbReference type="GO" id="GO:0042026">
    <property type="term" value="P:protein refolding"/>
    <property type="evidence" value="ECO:0007669"/>
    <property type="project" value="InterPro"/>
</dbReference>
<dbReference type="CDD" id="cd03344">
    <property type="entry name" value="GroEL"/>
    <property type="match status" value="1"/>
</dbReference>
<dbReference type="FunFam" id="3.50.7.10:FF:000001">
    <property type="entry name" value="60 kDa chaperonin"/>
    <property type="match status" value="1"/>
</dbReference>
<dbReference type="Gene3D" id="3.50.7.10">
    <property type="entry name" value="GroEL"/>
    <property type="match status" value="1"/>
</dbReference>
<dbReference type="Gene3D" id="1.10.560.10">
    <property type="entry name" value="GroEL-like equatorial domain"/>
    <property type="match status" value="1"/>
</dbReference>
<dbReference type="Gene3D" id="3.30.260.10">
    <property type="entry name" value="TCP-1-like chaperonin intermediate domain"/>
    <property type="match status" value="1"/>
</dbReference>
<dbReference type="HAMAP" id="MF_00600">
    <property type="entry name" value="CH60"/>
    <property type="match status" value="1"/>
</dbReference>
<dbReference type="InterPro" id="IPR018370">
    <property type="entry name" value="Chaperonin_Cpn60_CS"/>
</dbReference>
<dbReference type="InterPro" id="IPR001844">
    <property type="entry name" value="Cpn60/GroEL"/>
</dbReference>
<dbReference type="InterPro" id="IPR002423">
    <property type="entry name" value="Cpn60/GroEL/TCP-1"/>
</dbReference>
<dbReference type="InterPro" id="IPR027409">
    <property type="entry name" value="GroEL-like_apical_dom_sf"/>
</dbReference>
<dbReference type="InterPro" id="IPR027413">
    <property type="entry name" value="GROEL-like_equatorial_sf"/>
</dbReference>
<dbReference type="InterPro" id="IPR027410">
    <property type="entry name" value="TCP-1-like_intermed_sf"/>
</dbReference>
<dbReference type="NCBIfam" id="TIGR02348">
    <property type="entry name" value="GroEL"/>
    <property type="match status" value="1"/>
</dbReference>
<dbReference type="NCBIfam" id="NF000592">
    <property type="entry name" value="PRK00013.1"/>
    <property type="match status" value="1"/>
</dbReference>
<dbReference type="NCBIfam" id="NF009487">
    <property type="entry name" value="PRK12849.1"/>
    <property type="match status" value="1"/>
</dbReference>
<dbReference type="NCBIfam" id="NF009488">
    <property type="entry name" value="PRK12850.1"/>
    <property type="match status" value="1"/>
</dbReference>
<dbReference type="NCBIfam" id="NF009489">
    <property type="entry name" value="PRK12851.1"/>
    <property type="match status" value="1"/>
</dbReference>
<dbReference type="PANTHER" id="PTHR45633">
    <property type="entry name" value="60 KDA HEAT SHOCK PROTEIN, MITOCHONDRIAL"/>
    <property type="match status" value="1"/>
</dbReference>
<dbReference type="Pfam" id="PF00118">
    <property type="entry name" value="Cpn60_TCP1"/>
    <property type="match status" value="1"/>
</dbReference>
<dbReference type="PRINTS" id="PR00298">
    <property type="entry name" value="CHAPERONIN60"/>
</dbReference>
<dbReference type="SUPFAM" id="SSF52029">
    <property type="entry name" value="GroEL apical domain-like"/>
    <property type="match status" value="1"/>
</dbReference>
<dbReference type="SUPFAM" id="SSF48592">
    <property type="entry name" value="GroEL equatorial domain-like"/>
    <property type="match status" value="1"/>
</dbReference>
<dbReference type="SUPFAM" id="SSF54849">
    <property type="entry name" value="GroEL-intermediate domain like"/>
    <property type="match status" value="1"/>
</dbReference>
<dbReference type="PROSITE" id="PS00296">
    <property type="entry name" value="CHAPERONINS_CPN60"/>
    <property type="match status" value="1"/>
</dbReference>
<accession>O74261</accession>
<accession>A0A1D8PT81</accession>
<accession>Q59U15</accession>
<proteinExistence type="inferred from homology"/>
<feature type="transit peptide" description="Mitochondrion" evidence="2">
    <location>
        <begin position="1"/>
        <end status="unknown"/>
    </location>
</feature>
<feature type="chain" id="PRO_0000005041" description="Heat shock protein 60, mitochondrial">
    <location>
        <begin status="unknown"/>
        <end position="566"/>
    </location>
</feature>
<feature type="region of interest" description="Disordered" evidence="3">
    <location>
        <begin position="546"/>
        <end position="566"/>
    </location>
</feature>
<comment type="function">
    <text evidence="1">May participate in assembly and/or disassembly of proteins imported into the mitochondrion. HSP60 are ATPases and have affinity for unfolded proteins (By similarity).</text>
</comment>
<comment type="subcellular location">
    <subcellularLocation>
        <location>Mitochondrion</location>
    </subcellularLocation>
</comment>
<comment type="similarity">
    <text evidence="4">Belongs to the chaperonin (HSP60) family.</text>
</comment>
<organism>
    <name type="scientific">Candida albicans (strain SC5314 / ATCC MYA-2876)</name>
    <name type="common">Yeast</name>
    <dbReference type="NCBI Taxonomy" id="237561"/>
    <lineage>
        <taxon>Eukaryota</taxon>
        <taxon>Fungi</taxon>
        <taxon>Dikarya</taxon>
        <taxon>Ascomycota</taxon>
        <taxon>Saccharomycotina</taxon>
        <taxon>Pichiomycetes</taxon>
        <taxon>Debaryomycetaceae</taxon>
        <taxon>Candida/Lodderomyces clade</taxon>
        <taxon>Candida</taxon>
    </lineage>
</organism>